<protein>
    <recommendedName>
        <fullName>Homeobox-leucine zipper protein HAT14</fullName>
    </recommendedName>
    <alternativeName>
        <fullName>Homeodomain-leucine zipper protein HAT14</fullName>
        <shortName>HD-ZIP protein 14</shortName>
    </alternativeName>
</protein>
<keyword id="KW-0025">Alternative splicing</keyword>
<keyword id="KW-0238">DNA-binding</keyword>
<keyword id="KW-0371">Homeobox</keyword>
<keyword id="KW-0539">Nucleus</keyword>
<keyword id="KW-1185">Reference proteome</keyword>
<keyword id="KW-0804">Transcription</keyword>
<keyword id="KW-0805">Transcription regulation</keyword>
<evidence type="ECO:0000250" key="1"/>
<evidence type="ECO:0000255" key="2">
    <source>
        <dbReference type="PROSITE-ProRule" id="PRU00108"/>
    </source>
</evidence>
<evidence type="ECO:0000256" key="3">
    <source>
        <dbReference type="SAM" id="MobiDB-lite"/>
    </source>
</evidence>
<evidence type="ECO:0000305" key="4"/>
<comment type="function">
    <text evidence="1">Probable transcription factor.</text>
</comment>
<comment type="subcellular location">
    <subcellularLocation>
        <location evidence="4">Nucleus</location>
    </subcellularLocation>
</comment>
<comment type="alternative products">
    <event type="alternative splicing"/>
    <isoform>
        <id>P46665-1</id>
        <name>1</name>
        <sequence type="displayed"/>
    </isoform>
    <isoform>
        <id>P46665-2</id>
        <name>2</name>
        <sequence type="described" ref="VSP_033326 VSP_033327"/>
    </isoform>
</comment>
<comment type="similarity">
    <text evidence="4">Belongs to the HD-ZIP homeobox family. Class II subfamily.</text>
</comment>
<comment type="sequence caution" evidence="4">
    <conflict type="erroneous gene model prediction">
        <sequence resource="EMBL-CDS" id="BAB09805"/>
    </conflict>
</comment>
<name>HAT14_ARATH</name>
<dbReference type="EMBL" id="AJ431182">
    <property type="protein sequence ID" value="CAD24012.2"/>
    <property type="molecule type" value="mRNA"/>
</dbReference>
<dbReference type="EMBL" id="AP002032">
    <property type="protein sequence ID" value="BAB09805.1"/>
    <property type="status" value="ALT_SEQ"/>
    <property type="molecule type" value="Genomic_DNA"/>
</dbReference>
<dbReference type="EMBL" id="CP002688">
    <property type="protein sequence ID" value="AED91053.1"/>
    <property type="molecule type" value="Genomic_DNA"/>
</dbReference>
<dbReference type="EMBL" id="CP002688">
    <property type="protein sequence ID" value="AED91054.1"/>
    <property type="molecule type" value="Genomic_DNA"/>
</dbReference>
<dbReference type="EMBL" id="CP002688">
    <property type="protein sequence ID" value="ANM70497.1"/>
    <property type="molecule type" value="Genomic_DNA"/>
</dbReference>
<dbReference type="EMBL" id="BT005879">
    <property type="protein sequence ID" value="AAO64814.1"/>
    <property type="molecule type" value="mRNA"/>
</dbReference>
<dbReference type="EMBL" id="AK227423">
    <property type="protein sequence ID" value="BAE99427.1"/>
    <property type="molecule type" value="mRNA"/>
</dbReference>
<dbReference type="EMBL" id="U09334">
    <property type="protein sequence ID" value="AAA56900.1"/>
    <property type="molecule type" value="mRNA"/>
</dbReference>
<dbReference type="PIR" id="T52367">
    <property type="entry name" value="T52367"/>
</dbReference>
<dbReference type="RefSeq" id="NP_001332103.1">
    <molecule id="P46665-2"/>
    <property type="nucleotide sequence ID" value="NM_001342900.1"/>
</dbReference>
<dbReference type="RefSeq" id="NP_196289.2">
    <molecule id="P46665-1"/>
    <property type="nucleotide sequence ID" value="NM_120754.5"/>
</dbReference>
<dbReference type="RefSeq" id="NP_974743.1">
    <molecule id="P46665-2"/>
    <property type="nucleotide sequence ID" value="NM_203014.3"/>
</dbReference>
<dbReference type="SMR" id="P46665"/>
<dbReference type="BioGRID" id="15839">
    <property type="interactions" value="8"/>
</dbReference>
<dbReference type="FunCoup" id="P46665">
    <property type="interactions" value="54"/>
</dbReference>
<dbReference type="IntAct" id="P46665">
    <property type="interactions" value="8"/>
</dbReference>
<dbReference type="STRING" id="3702.P46665"/>
<dbReference type="iPTMnet" id="P46665"/>
<dbReference type="PaxDb" id="3702-AT5G06710.1"/>
<dbReference type="ProteomicsDB" id="230126">
    <molecule id="P46665-1"/>
</dbReference>
<dbReference type="EnsemblPlants" id="AT5G06710.1">
    <molecule id="P46665-1"/>
    <property type="protein sequence ID" value="AT5G06710.1"/>
    <property type="gene ID" value="AT5G06710"/>
</dbReference>
<dbReference type="EnsemblPlants" id="AT5G06710.2">
    <molecule id="P46665-2"/>
    <property type="protein sequence ID" value="AT5G06710.2"/>
    <property type="gene ID" value="AT5G06710"/>
</dbReference>
<dbReference type="EnsemblPlants" id="AT5G06710.3">
    <molecule id="P46665-2"/>
    <property type="protein sequence ID" value="AT5G06710.3"/>
    <property type="gene ID" value="AT5G06710"/>
</dbReference>
<dbReference type="GeneID" id="830560"/>
<dbReference type="Gramene" id="AT5G06710.1">
    <molecule id="P46665-1"/>
    <property type="protein sequence ID" value="AT5G06710.1"/>
    <property type="gene ID" value="AT5G06710"/>
</dbReference>
<dbReference type="Gramene" id="AT5G06710.2">
    <molecule id="P46665-2"/>
    <property type="protein sequence ID" value="AT5G06710.2"/>
    <property type="gene ID" value="AT5G06710"/>
</dbReference>
<dbReference type="Gramene" id="AT5G06710.3">
    <molecule id="P46665-2"/>
    <property type="protein sequence ID" value="AT5G06710.3"/>
    <property type="gene ID" value="AT5G06710"/>
</dbReference>
<dbReference type="KEGG" id="ath:AT5G06710"/>
<dbReference type="Araport" id="AT5G06710"/>
<dbReference type="TAIR" id="AT5G06710">
    <property type="gene designation" value="HAT14"/>
</dbReference>
<dbReference type="eggNOG" id="KOG0483">
    <property type="taxonomic scope" value="Eukaryota"/>
</dbReference>
<dbReference type="HOGENOM" id="CLU_049516_1_1_1"/>
<dbReference type="InParanoid" id="P46665"/>
<dbReference type="OrthoDB" id="6159439at2759"/>
<dbReference type="PhylomeDB" id="P46665"/>
<dbReference type="PRO" id="PR:P46665"/>
<dbReference type="Proteomes" id="UP000006548">
    <property type="component" value="Chromosome 5"/>
</dbReference>
<dbReference type="ExpressionAtlas" id="P46665">
    <property type="expression patterns" value="baseline and differential"/>
</dbReference>
<dbReference type="GO" id="GO:0005634">
    <property type="term" value="C:nucleus"/>
    <property type="evidence" value="ECO:0007669"/>
    <property type="project" value="UniProtKB-SubCell"/>
</dbReference>
<dbReference type="GO" id="GO:0003700">
    <property type="term" value="F:DNA-binding transcription factor activity"/>
    <property type="evidence" value="ECO:0000250"/>
    <property type="project" value="TAIR"/>
</dbReference>
<dbReference type="GO" id="GO:0000981">
    <property type="term" value="F:DNA-binding transcription factor activity, RNA polymerase II-specific"/>
    <property type="evidence" value="ECO:0007669"/>
    <property type="project" value="InterPro"/>
</dbReference>
<dbReference type="GO" id="GO:0000976">
    <property type="term" value="F:transcription cis-regulatory region binding"/>
    <property type="evidence" value="ECO:0000353"/>
    <property type="project" value="TAIR"/>
</dbReference>
<dbReference type="CDD" id="cd00086">
    <property type="entry name" value="homeodomain"/>
    <property type="match status" value="1"/>
</dbReference>
<dbReference type="FunFam" id="1.10.10.60:FF:000577">
    <property type="entry name" value="Homeobox-leucine zipper protein 18"/>
    <property type="match status" value="1"/>
</dbReference>
<dbReference type="Gene3D" id="1.10.10.60">
    <property type="entry name" value="Homeodomain-like"/>
    <property type="match status" value="1"/>
</dbReference>
<dbReference type="InterPro" id="IPR001356">
    <property type="entry name" value="HD"/>
</dbReference>
<dbReference type="InterPro" id="IPR050762">
    <property type="entry name" value="HD-ZIP_Homeobox_LZ_Class_II"/>
</dbReference>
<dbReference type="InterPro" id="IPR017970">
    <property type="entry name" value="Homeobox_CS"/>
</dbReference>
<dbReference type="InterPro" id="IPR009057">
    <property type="entry name" value="Homeodomain-like_sf"/>
</dbReference>
<dbReference type="InterPro" id="IPR003106">
    <property type="entry name" value="Leu_zip_homeo"/>
</dbReference>
<dbReference type="PANTHER" id="PTHR45714">
    <property type="entry name" value="HOMEOBOX-LEUCINE ZIPPER PROTEIN HAT14"/>
    <property type="match status" value="1"/>
</dbReference>
<dbReference type="PANTHER" id="PTHR45714:SF39">
    <property type="entry name" value="HOMEOBOX-LEUCINE ZIPPER PROTEIN HAT14"/>
    <property type="match status" value="1"/>
</dbReference>
<dbReference type="Pfam" id="PF02183">
    <property type="entry name" value="HALZ"/>
    <property type="match status" value="1"/>
</dbReference>
<dbReference type="Pfam" id="PF00046">
    <property type="entry name" value="Homeodomain"/>
    <property type="match status" value="1"/>
</dbReference>
<dbReference type="SMART" id="SM00340">
    <property type="entry name" value="HALZ"/>
    <property type="match status" value="1"/>
</dbReference>
<dbReference type="SMART" id="SM00389">
    <property type="entry name" value="HOX"/>
    <property type="match status" value="1"/>
</dbReference>
<dbReference type="SUPFAM" id="SSF46689">
    <property type="entry name" value="Homeodomain-like"/>
    <property type="match status" value="1"/>
</dbReference>
<dbReference type="PROSITE" id="PS00027">
    <property type="entry name" value="HOMEOBOX_1"/>
    <property type="match status" value="1"/>
</dbReference>
<dbReference type="PROSITE" id="PS50071">
    <property type="entry name" value="HOMEOBOX_2"/>
    <property type="match status" value="1"/>
</dbReference>
<sequence>MELALSLGDNTKKQFSFMEKNSKINNPSVSSTSTSEKDLGFCMALDVAFGGHRSLSSSSSPSVEDEKKKPAPRAKKSDEFRVSSSVDPPLQLQLHFPNWLPENSKGRQGGRMPLGAATVVEEEEEEEEAVPSMSVSPPDSVTSSFQLDFGIKSYGYERRSNKRDIDDEVERSASRASNEDNDDENGSTRKKLRLSKDQSAFLEDSFKEHSTLNPKQKIALAKQLNLRPRQVEVWFQNRRARTKLKQTEVDCEYLKRCCESLTEENRRLQKEVKELRTLKTSTPFYMQLPATTLTMCPSCERVATSAAQPSTSAAHNLCLSTSSLIPVKPRPAKQVS</sequence>
<accession>P46665</accession>
<accession>Q0WTX1</accession>
<accession>Q3E9K4</accession>
<accession>Q84TE1</accession>
<reference key="1">
    <citation type="submission" date="2002-02" db="EMBL/GenBank/DDBJ databases">
        <title>Nucleotide sequence of the Arabidopsis HAT14 mRNA, encoding an HD-Zip II protein related to ATHB-2.</title>
        <authorList>
            <person name="Sessa G."/>
            <person name="Carabelli M."/>
            <person name="Ciarbelli A.R."/>
            <person name="Ruzza V."/>
            <person name="Steindler C."/>
            <person name="Ruberti I."/>
        </authorList>
    </citation>
    <scope>NUCLEOTIDE SEQUENCE [MRNA] (ISOFORM 1)</scope>
    <source>
        <strain>cv. Columbia</strain>
    </source>
</reference>
<reference key="2">
    <citation type="submission" date="2008-01" db="EMBL/GenBank/DDBJ databases">
        <authorList>
            <person name="Carabelli M."/>
        </authorList>
    </citation>
    <scope>SEQUENCE REVISION TO 1-111</scope>
</reference>
<reference key="3">
    <citation type="submission" date="2000-05" db="EMBL/GenBank/DDBJ databases">
        <title>Structural analysis of Arabidopsis thaliana chromosome 5. XI.</title>
        <authorList>
            <person name="Kaneko T."/>
            <person name="Katoh T."/>
            <person name="Asamizu E."/>
            <person name="Sato S."/>
            <person name="Nakamura Y."/>
            <person name="Kotani H."/>
            <person name="Tabata S."/>
        </authorList>
    </citation>
    <scope>NUCLEOTIDE SEQUENCE [LARGE SCALE GENOMIC DNA]</scope>
    <source>
        <strain>cv. Columbia</strain>
    </source>
</reference>
<reference key="4">
    <citation type="journal article" date="2017" name="Plant J.">
        <title>Araport11: a complete reannotation of the Arabidopsis thaliana reference genome.</title>
        <authorList>
            <person name="Cheng C.Y."/>
            <person name="Krishnakumar V."/>
            <person name="Chan A.P."/>
            <person name="Thibaud-Nissen F."/>
            <person name="Schobel S."/>
            <person name="Town C.D."/>
        </authorList>
    </citation>
    <scope>GENOME REANNOTATION</scope>
    <source>
        <strain>cv. Columbia</strain>
    </source>
</reference>
<reference key="5">
    <citation type="journal article" date="2003" name="Science">
        <title>Empirical analysis of transcriptional activity in the Arabidopsis genome.</title>
        <authorList>
            <person name="Yamada K."/>
            <person name="Lim J."/>
            <person name="Dale J.M."/>
            <person name="Chen H."/>
            <person name="Shinn P."/>
            <person name="Palm C.J."/>
            <person name="Southwick A.M."/>
            <person name="Wu H.C."/>
            <person name="Kim C.J."/>
            <person name="Nguyen M."/>
            <person name="Pham P.K."/>
            <person name="Cheuk R.F."/>
            <person name="Karlin-Newmann G."/>
            <person name="Liu S.X."/>
            <person name="Lam B."/>
            <person name="Sakano H."/>
            <person name="Wu T."/>
            <person name="Yu G."/>
            <person name="Miranda M."/>
            <person name="Quach H.L."/>
            <person name="Tripp M."/>
            <person name="Chang C.H."/>
            <person name="Lee J.M."/>
            <person name="Toriumi M.J."/>
            <person name="Chan M.M."/>
            <person name="Tang C.C."/>
            <person name="Onodera C.S."/>
            <person name="Deng J.M."/>
            <person name="Akiyama K."/>
            <person name="Ansari Y."/>
            <person name="Arakawa T."/>
            <person name="Banh J."/>
            <person name="Banno F."/>
            <person name="Bowser L."/>
            <person name="Brooks S.Y."/>
            <person name="Carninci P."/>
            <person name="Chao Q."/>
            <person name="Choy N."/>
            <person name="Enju A."/>
            <person name="Goldsmith A.D."/>
            <person name="Gurjal M."/>
            <person name="Hansen N.F."/>
            <person name="Hayashizaki Y."/>
            <person name="Johnson-Hopson C."/>
            <person name="Hsuan V.W."/>
            <person name="Iida K."/>
            <person name="Karnes M."/>
            <person name="Khan S."/>
            <person name="Koesema E."/>
            <person name="Ishida J."/>
            <person name="Jiang P.X."/>
            <person name="Jones T."/>
            <person name="Kawai J."/>
            <person name="Kamiya A."/>
            <person name="Meyers C."/>
            <person name="Nakajima M."/>
            <person name="Narusaka M."/>
            <person name="Seki M."/>
            <person name="Sakurai T."/>
            <person name="Satou M."/>
            <person name="Tamse R."/>
            <person name="Vaysberg M."/>
            <person name="Wallender E.K."/>
            <person name="Wong C."/>
            <person name="Yamamura Y."/>
            <person name="Yuan S."/>
            <person name="Shinozaki K."/>
            <person name="Davis R.W."/>
            <person name="Theologis A."/>
            <person name="Ecker J.R."/>
        </authorList>
    </citation>
    <scope>NUCLEOTIDE SEQUENCE [LARGE SCALE MRNA] (ISOFORM 1)</scope>
    <source>
        <strain>cv. Columbia</strain>
    </source>
</reference>
<reference key="6">
    <citation type="submission" date="2006-07" db="EMBL/GenBank/DDBJ databases">
        <title>Large-scale analysis of RIKEN Arabidopsis full-length (RAFL) cDNAs.</title>
        <authorList>
            <person name="Totoki Y."/>
            <person name="Seki M."/>
            <person name="Ishida J."/>
            <person name="Nakajima M."/>
            <person name="Enju A."/>
            <person name="Kamiya A."/>
            <person name="Narusaka M."/>
            <person name="Shin-i T."/>
            <person name="Nakagawa M."/>
            <person name="Sakamoto N."/>
            <person name="Oishi K."/>
            <person name="Kohara Y."/>
            <person name="Kobayashi M."/>
            <person name="Toyoda A."/>
            <person name="Sakaki Y."/>
            <person name="Sakurai T."/>
            <person name="Iida K."/>
            <person name="Akiyama K."/>
            <person name="Satou M."/>
            <person name="Toyoda T."/>
            <person name="Konagaya A."/>
            <person name="Carninci P."/>
            <person name="Kawai J."/>
            <person name="Hayashizaki Y."/>
            <person name="Shinozaki K."/>
        </authorList>
    </citation>
    <scope>NUCLEOTIDE SEQUENCE [LARGE SCALE MRNA] (ISOFORM 1)</scope>
    <source>
        <strain>cv. Columbia</strain>
    </source>
</reference>
<reference key="7">
    <citation type="journal article" date="1994" name="Proc. Natl. Acad. Sci. U.S.A.">
        <title>Structure of homeobox-leucine zipper genes suggests a model for the evolution of gene families.</title>
        <authorList>
            <person name="Schena M."/>
            <person name="Davis R.W."/>
        </authorList>
    </citation>
    <scope>NUCLEOTIDE SEQUENCE [MRNA] OF 172-336 (ISOFORM 1)</scope>
    <source>
        <strain>cv. Columbia</strain>
    </source>
</reference>
<reference key="8">
    <citation type="journal article" date="2005" name="Plant Physiol.">
        <title>Homeodomain leucine zipper class I genes in Arabidopsis. Expression patterns and phylogenetic relationships.</title>
        <authorList>
            <person name="Henriksson E."/>
            <person name="Olsson A.S.B."/>
            <person name="Johannesson H."/>
            <person name="Johansson H."/>
            <person name="Hanson J."/>
            <person name="Engstroem P."/>
            <person name="Soederman E."/>
        </authorList>
    </citation>
    <scope>GENE FAMILY</scope>
</reference>
<gene>
    <name type="primary">HAT14</name>
    <name type="ordered locus">At5g06710</name>
    <name type="ORF">MPH15.6</name>
</gene>
<organism>
    <name type="scientific">Arabidopsis thaliana</name>
    <name type="common">Mouse-ear cress</name>
    <dbReference type="NCBI Taxonomy" id="3702"/>
    <lineage>
        <taxon>Eukaryota</taxon>
        <taxon>Viridiplantae</taxon>
        <taxon>Streptophyta</taxon>
        <taxon>Embryophyta</taxon>
        <taxon>Tracheophyta</taxon>
        <taxon>Spermatophyta</taxon>
        <taxon>Magnoliopsida</taxon>
        <taxon>eudicotyledons</taxon>
        <taxon>Gunneridae</taxon>
        <taxon>Pentapetalae</taxon>
        <taxon>rosids</taxon>
        <taxon>malvids</taxon>
        <taxon>Brassicales</taxon>
        <taxon>Brassicaceae</taxon>
        <taxon>Camelineae</taxon>
        <taxon>Arabidopsis</taxon>
    </lineage>
</organism>
<proteinExistence type="evidence at transcript level"/>
<feature type="chain" id="PRO_0000049140" description="Homeobox-leucine zipper protein HAT14">
    <location>
        <begin position="1"/>
        <end position="336"/>
    </location>
</feature>
<feature type="DNA-binding region" description="Homeobox" evidence="2">
    <location>
        <begin position="187"/>
        <end position="246"/>
    </location>
</feature>
<feature type="region of interest" description="Disordered" evidence="3">
    <location>
        <begin position="53"/>
        <end position="141"/>
    </location>
</feature>
<feature type="region of interest" description="Disordered" evidence="3">
    <location>
        <begin position="160"/>
        <end position="194"/>
    </location>
</feature>
<feature type="region of interest" description="Leucine-zipper">
    <location>
        <begin position="254"/>
        <end position="275"/>
    </location>
</feature>
<feature type="compositionally biased region" description="Basic and acidic residues" evidence="3">
    <location>
        <begin position="64"/>
        <end position="81"/>
    </location>
</feature>
<feature type="compositionally biased region" description="Acidic residues" evidence="3">
    <location>
        <begin position="120"/>
        <end position="129"/>
    </location>
</feature>
<feature type="compositionally biased region" description="Low complexity" evidence="3">
    <location>
        <begin position="130"/>
        <end position="141"/>
    </location>
</feature>
<feature type="compositionally biased region" description="Basic and acidic residues" evidence="3">
    <location>
        <begin position="160"/>
        <end position="173"/>
    </location>
</feature>
<feature type="splice variant" id="VSP_033326" description="In isoform 2." evidence="4">
    <original>KQKIALAKQLNLRPRQVEVWFQN</original>
    <variation>VRVPFFTVFIYLKFVFLEFILFF</variation>
    <location>
        <begin position="215"/>
        <end position="237"/>
    </location>
</feature>
<feature type="splice variant" id="VSP_033327" description="In isoform 2." evidence="4">
    <location>
        <begin position="238"/>
        <end position="336"/>
    </location>
</feature>
<feature type="sequence conflict" description="In Ref. 5; AAO64814." evidence="4" ref="5">
    <original>E</original>
    <variation>K</variation>
    <location>
        <position position="203"/>
    </location>
</feature>